<keyword id="KW-0175">Coiled coil</keyword>
<keyword id="KW-0963">Cytoplasm</keyword>
<keyword id="KW-0346">Stress response</keyword>
<comment type="function">
    <text evidence="1">Inhibits RpoS proteolysis by regulating RssB activity, thereby increasing the stability of the sigma stress factor RpoS especially during phosphate and magnesium starvation, but also in stationary phase and during nitrogen starvation. Its effect on RpoS stability is due to its interaction with RssB, which probably blocks the interaction of RssB with RpoS, and the consequent delivery of the RssB-RpoS complex to the ClpXP protein degradation pathway.</text>
</comment>
<comment type="subunit">
    <text evidence="1">Interacts with RssB.</text>
</comment>
<comment type="subcellular location">
    <subcellularLocation>
        <location evidence="1">Cytoplasm</location>
    </subcellularLocation>
</comment>
<comment type="similarity">
    <text evidence="1">Belongs to the IraP family.</text>
</comment>
<reference key="1">
    <citation type="journal article" date="2009" name="BMC Genomics">
        <title>Pseudogene accumulation in the evolutionary histories of Salmonella enterica serovars Paratyphi A and Typhi.</title>
        <authorList>
            <person name="Holt K.E."/>
            <person name="Thomson N.R."/>
            <person name="Wain J."/>
            <person name="Langridge G.C."/>
            <person name="Hasan R."/>
            <person name="Bhutta Z.A."/>
            <person name="Quail M.A."/>
            <person name="Norbertczak H."/>
            <person name="Walker D."/>
            <person name="Simmonds M."/>
            <person name="White B."/>
            <person name="Bason N."/>
            <person name="Mungall K."/>
            <person name="Dougan G."/>
            <person name="Parkhill J."/>
        </authorList>
    </citation>
    <scope>NUCLEOTIDE SEQUENCE [LARGE SCALE GENOMIC DNA]</scope>
    <source>
        <strain>AKU_12601</strain>
    </source>
</reference>
<sequence length="86" mass="9883">MKNLIAELLLKLAQKEEESKELVAQVEALEIIVTAMLRNMAQNEQEMLIRQVEGALEGVKPDASVPDHDTELLRQYVKKLLRHPRH</sequence>
<feature type="chain" id="PRO_1000138494" description="Anti-adapter protein IraP">
    <location>
        <begin position="1"/>
        <end position="86"/>
    </location>
</feature>
<feature type="coiled-coil region" evidence="1">
    <location>
        <begin position="1"/>
        <end position="36"/>
    </location>
</feature>
<proteinExistence type="inferred from homology"/>
<name>IRAP_SALPK</name>
<gene>
    <name evidence="1" type="primary">iraP</name>
    <name type="ordered locus">SSPA2183</name>
</gene>
<evidence type="ECO:0000255" key="1">
    <source>
        <dbReference type="HAMAP-Rule" id="MF_01198"/>
    </source>
</evidence>
<dbReference type="EMBL" id="FM200053">
    <property type="protein sequence ID" value="CAR60393.1"/>
    <property type="molecule type" value="Genomic_DNA"/>
</dbReference>
<dbReference type="RefSeq" id="WP_001518423.1">
    <property type="nucleotide sequence ID" value="NC_011147.1"/>
</dbReference>
<dbReference type="SMR" id="B5BDF0"/>
<dbReference type="KEGG" id="sek:SSPA2183"/>
<dbReference type="HOGENOM" id="CLU_169517_0_0_6"/>
<dbReference type="Proteomes" id="UP000001869">
    <property type="component" value="Chromosome"/>
</dbReference>
<dbReference type="GO" id="GO:0005737">
    <property type="term" value="C:cytoplasm"/>
    <property type="evidence" value="ECO:0007669"/>
    <property type="project" value="UniProtKB-SubCell"/>
</dbReference>
<dbReference type="GO" id="GO:0009267">
    <property type="term" value="P:cellular response to starvation"/>
    <property type="evidence" value="ECO:0007669"/>
    <property type="project" value="UniProtKB-UniRule"/>
</dbReference>
<dbReference type="HAMAP" id="MF_01198">
    <property type="entry name" value="Anti_adapt_IraP"/>
    <property type="match status" value="1"/>
</dbReference>
<dbReference type="InterPro" id="IPR019732">
    <property type="entry name" value="SigmaS_Anti-adapt_IraP"/>
</dbReference>
<dbReference type="NCBIfam" id="NF007598">
    <property type="entry name" value="PRK10244.1"/>
    <property type="match status" value="1"/>
</dbReference>
<dbReference type="Pfam" id="PF10796">
    <property type="entry name" value="Anti-adapt_IraP"/>
    <property type="match status" value="1"/>
</dbReference>
<protein>
    <recommendedName>
        <fullName evidence="1">Anti-adapter protein IraP</fullName>
    </recommendedName>
</protein>
<organism>
    <name type="scientific">Salmonella paratyphi A (strain AKU_12601)</name>
    <dbReference type="NCBI Taxonomy" id="554290"/>
    <lineage>
        <taxon>Bacteria</taxon>
        <taxon>Pseudomonadati</taxon>
        <taxon>Pseudomonadota</taxon>
        <taxon>Gammaproteobacteria</taxon>
        <taxon>Enterobacterales</taxon>
        <taxon>Enterobacteriaceae</taxon>
        <taxon>Salmonella</taxon>
    </lineage>
</organism>
<accession>B5BDF0</accession>